<feature type="chain" id="PRO_0000197148" description="Nuclear receptor corepressor 1">
    <location>
        <begin position="1"/>
        <end position="1778"/>
    </location>
</feature>
<feature type="domain" description="SANT" evidence="2">
    <location>
        <begin position="125"/>
        <end position="176"/>
    </location>
</feature>
<feature type="domain" description="Myb-like" evidence="1">
    <location>
        <begin position="356"/>
        <end position="398"/>
    </location>
</feature>
<feature type="region of interest" description="Disordered" evidence="3">
    <location>
        <begin position="409"/>
        <end position="671"/>
    </location>
</feature>
<feature type="region of interest" description="Disordered" evidence="3">
    <location>
        <begin position="992"/>
        <end position="1024"/>
    </location>
</feature>
<feature type="region of interest" description="Disordered" evidence="3">
    <location>
        <begin position="1195"/>
        <end position="1218"/>
    </location>
</feature>
<feature type="region of interest" description="Disordered" evidence="3">
    <location>
        <begin position="1276"/>
        <end position="1339"/>
    </location>
</feature>
<feature type="region of interest" description="Disordered" evidence="3">
    <location>
        <begin position="1414"/>
        <end position="1434"/>
    </location>
</feature>
<feature type="region of interest" description="Disordered" evidence="3">
    <location>
        <begin position="1646"/>
        <end position="1718"/>
    </location>
</feature>
<feature type="compositionally biased region" description="Acidic residues" evidence="3">
    <location>
        <begin position="409"/>
        <end position="421"/>
    </location>
</feature>
<feature type="compositionally biased region" description="Low complexity" evidence="3">
    <location>
        <begin position="431"/>
        <end position="442"/>
    </location>
</feature>
<feature type="compositionally biased region" description="Low complexity" evidence="3">
    <location>
        <begin position="450"/>
        <end position="469"/>
    </location>
</feature>
<feature type="compositionally biased region" description="Acidic residues" evidence="3">
    <location>
        <begin position="478"/>
        <end position="493"/>
    </location>
</feature>
<feature type="compositionally biased region" description="Basic and acidic residues" evidence="3">
    <location>
        <begin position="494"/>
        <end position="513"/>
    </location>
</feature>
<feature type="compositionally biased region" description="Acidic residues" evidence="3">
    <location>
        <begin position="517"/>
        <end position="545"/>
    </location>
</feature>
<feature type="compositionally biased region" description="Acidic residues" evidence="3">
    <location>
        <begin position="599"/>
        <end position="616"/>
    </location>
</feature>
<feature type="compositionally biased region" description="Low complexity" evidence="3">
    <location>
        <begin position="626"/>
        <end position="639"/>
    </location>
</feature>
<feature type="compositionally biased region" description="Low complexity" evidence="3">
    <location>
        <begin position="649"/>
        <end position="671"/>
    </location>
</feature>
<feature type="compositionally biased region" description="Low complexity" evidence="3">
    <location>
        <begin position="1276"/>
        <end position="1285"/>
    </location>
</feature>
<feature type="compositionally biased region" description="Low complexity" evidence="3">
    <location>
        <begin position="1687"/>
        <end position="1696"/>
    </location>
</feature>
<feature type="splice variant" id="VSP_043602" description="In isoform c." evidence="7">
    <location>
        <begin position="1171"/>
        <end position="1253"/>
    </location>
</feature>
<protein>
    <recommendedName>
        <fullName>Nuclear receptor corepressor 1</fullName>
        <shortName>N-CoR</shortName>
        <shortName>N-CoR1</shortName>
    </recommendedName>
    <alternativeName>
        <fullName>Gex-3-interacting protein 8</fullName>
    </alternativeName>
    <alternativeName>
        <fullName>Prion-like-(Q/N-rich) domain-bearing protein 12</fullName>
    </alternativeName>
</protein>
<organism>
    <name type="scientific">Caenorhabditis elegans</name>
    <dbReference type="NCBI Taxonomy" id="6239"/>
    <lineage>
        <taxon>Eukaryota</taxon>
        <taxon>Metazoa</taxon>
        <taxon>Ecdysozoa</taxon>
        <taxon>Nematoda</taxon>
        <taxon>Chromadorea</taxon>
        <taxon>Rhabditida</taxon>
        <taxon>Rhabditina</taxon>
        <taxon>Rhabditomorpha</taxon>
        <taxon>Rhabditoidea</taxon>
        <taxon>Rhabditidae</taxon>
        <taxon>Peloderinae</taxon>
        <taxon>Caenorhabditis</taxon>
    </lineage>
</organism>
<proteinExistence type="evidence at protein level"/>
<dbReference type="EMBL" id="FO080531">
    <property type="protein sequence ID" value="CCD64442.1"/>
    <property type="molecule type" value="Genomic_DNA"/>
</dbReference>
<dbReference type="EMBL" id="FO080531">
    <property type="protein sequence ID" value="CCD64444.2"/>
    <property type="molecule type" value="Genomic_DNA"/>
</dbReference>
<dbReference type="PIR" id="S44758">
    <property type="entry name" value="S44758"/>
</dbReference>
<dbReference type="PIR" id="S44759">
    <property type="entry name" value="S44759"/>
</dbReference>
<dbReference type="RefSeq" id="NP_498773.3">
    <molecule id="P34333-2"/>
    <property type="nucleotide sequence ID" value="NM_066372.8"/>
</dbReference>
<dbReference type="RefSeq" id="NP_741245.3">
    <molecule id="P34333-3"/>
    <property type="nucleotide sequence ID" value="NM_171207.9"/>
</dbReference>
<dbReference type="SMR" id="P34333"/>
<dbReference type="BioGRID" id="41351">
    <property type="interactions" value="4"/>
</dbReference>
<dbReference type="DIP" id="DIP-24789N"/>
<dbReference type="FunCoup" id="P34333">
    <property type="interactions" value="1254"/>
</dbReference>
<dbReference type="IntAct" id="P34333">
    <property type="interactions" value="1"/>
</dbReference>
<dbReference type="STRING" id="6239.C14B9.6a.3"/>
<dbReference type="PaxDb" id="6239-C14B9.6a"/>
<dbReference type="PeptideAtlas" id="P34333"/>
<dbReference type="EnsemblMetazoa" id="C14B9.6a.1">
    <molecule id="P34333-2"/>
    <property type="protein sequence ID" value="C14B9.6a.1"/>
    <property type="gene ID" value="WBGene00001565"/>
</dbReference>
<dbReference type="EnsemblMetazoa" id="C14B9.6c.1">
    <molecule id="P34333-3"/>
    <property type="protein sequence ID" value="C14B9.6c.1"/>
    <property type="gene ID" value="WBGene00001565"/>
</dbReference>
<dbReference type="GeneID" id="176145"/>
<dbReference type="KEGG" id="cel:CELE_C14B9.6"/>
<dbReference type="UCSC" id="C14B9.6c">
    <molecule id="P34333-2"/>
    <property type="organism name" value="c. elegans"/>
</dbReference>
<dbReference type="AGR" id="WB:WBGene00001565"/>
<dbReference type="CTD" id="176145"/>
<dbReference type="WormBase" id="C14B9.6a">
    <molecule id="P34333-2"/>
    <property type="protein sequence ID" value="CE42991"/>
    <property type="gene ID" value="WBGene00001565"/>
    <property type="gene designation" value="gei-8"/>
</dbReference>
<dbReference type="WormBase" id="C14B9.6c">
    <molecule id="P34333-3"/>
    <property type="protein sequence ID" value="CE48463"/>
    <property type="gene ID" value="WBGene00001565"/>
    <property type="gene designation" value="gei-8"/>
</dbReference>
<dbReference type="eggNOG" id="KOG1878">
    <property type="taxonomic scope" value="Eukaryota"/>
</dbReference>
<dbReference type="GeneTree" id="ENSGT00940000175552"/>
<dbReference type="InParanoid" id="P34333"/>
<dbReference type="OMA" id="NECKMQY"/>
<dbReference type="OrthoDB" id="10258692at2759"/>
<dbReference type="Reactome" id="R-CEL-381340">
    <property type="pathway name" value="Transcriptional regulation of white adipocyte differentiation"/>
</dbReference>
<dbReference type="Reactome" id="R-CEL-383280">
    <property type="pathway name" value="Nuclear Receptor transcription pathway"/>
</dbReference>
<dbReference type="PRO" id="PR:P34333"/>
<dbReference type="Proteomes" id="UP000001940">
    <property type="component" value="Chromosome III"/>
</dbReference>
<dbReference type="Bgee" id="WBGene00001565">
    <property type="expression patterns" value="Expressed in embryo and 3 other cell types or tissues"/>
</dbReference>
<dbReference type="GO" id="GO:0000785">
    <property type="term" value="C:chromatin"/>
    <property type="evidence" value="ECO:0000318"/>
    <property type="project" value="GO_Central"/>
</dbReference>
<dbReference type="GO" id="GO:0005634">
    <property type="term" value="C:nucleus"/>
    <property type="evidence" value="ECO:0007669"/>
    <property type="project" value="UniProtKB-SubCell"/>
</dbReference>
<dbReference type="GO" id="GO:0032991">
    <property type="term" value="C:protein-containing complex"/>
    <property type="evidence" value="ECO:0007669"/>
    <property type="project" value="UniProtKB-ARBA"/>
</dbReference>
<dbReference type="GO" id="GO:0003677">
    <property type="term" value="F:DNA binding"/>
    <property type="evidence" value="ECO:0007669"/>
    <property type="project" value="UniProtKB-KW"/>
</dbReference>
<dbReference type="GO" id="GO:0006357">
    <property type="term" value="P:regulation of transcription by RNA polymerase II"/>
    <property type="evidence" value="ECO:0000318"/>
    <property type="project" value="GO_Central"/>
</dbReference>
<dbReference type="CDD" id="cd00167">
    <property type="entry name" value="SANT"/>
    <property type="match status" value="1"/>
</dbReference>
<dbReference type="Gene3D" id="1.10.10.60">
    <property type="entry name" value="Homeodomain-like"/>
    <property type="match status" value="1"/>
</dbReference>
<dbReference type="InterPro" id="IPR051571">
    <property type="entry name" value="N-CoR_corepressor"/>
</dbReference>
<dbReference type="InterPro" id="IPR001005">
    <property type="entry name" value="SANT/Myb"/>
</dbReference>
<dbReference type="InterPro" id="IPR017884">
    <property type="entry name" value="SANT_dom"/>
</dbReference>
<dbReference type="PANTHER" id="PTHR13992">
    <property type="entry name" value="NUCLEAR RECEPTOR CO-REPRESSOR RELATED NCOR"/>
    <property type="match status" value="1"/>
</dbReference>
<dbReference type="PANTHER" id="PTHR13992:SF39">
    <property type="entry name" value="SMRTER, ISOFORM G"/>
    <property type="match status" value="1"/>
</dbReference>
<dbReference type="SMART" id="SM00717">
    <property type="entry name" value="SANT"/>
    <property type="match status" value="2"/>
</dbReference>
<dbReference type="PROSITE" id="PS50090">
    <property type="entry name" value="MYB_LIKE"/>
    <property type="match status" value="1"/>
</dbReference>
<dbReference type="PROSITE" id="PS51293">
    <property type="entry name" value="SANT"/>
    <property type="match status" value="1"/>
</dbReference>
<accession>P34333</accession>
<accession>B5MBV9</accession>
<accession>P34332</accession>
<accession>Q8MYR1</accession>
<reference key="1">
    <citation type="journal article" date="2013" name="PLoS ONE">
        <title>GEI-8, a homologue of vertebrate nuclear receptor corepressor NCoR/SMRT, regulates gonad development and neuronal functions in Caenorhabditis elegans.</title>
        <authorList>
            <person name="Mikolas P."/>
            <person name="Kollarova J."/>
            <person name="Sebkova K."/>
            <person name="Saudek V."/>
            <person name="Yilma P."/>
            <person name="Kostrouchova M."/>
            <person name="Krause M.W."/>
            <person name="Kostrouch Z."/>
            <person name="Kostrouchova M."/>
        </authorList>
    </citation>
    <scope>NUCLEOTIDE SEQUENCE [MRNA] (ISOFORMS A AND C)</scope>
    <scope>FUNCTION</scope>
    <scope>INTERACTION WITH NHR-60</scope>
    <scope>TISSUE SPECIFICITY</scope>
    <scope>DEVELOPMENTAL STAGE</scope>
    <scope>DISRUPTION PHENOTYPE</scope>
    <source>
        <strain>Bristol N2</strain>
    </source>
</reference>
<reference key="2">
    <citation type="journal article" date="1994" name="Nature">
        <title>2.2 Mb of contiguous nucleotide sequence from chromosome III of C. elegans.</title>
        <authorList>
            <person name="Wilson R."/>
            <person name="Ainscough R."/>
            <person name="Anderson K."/>
            <person name="Baynes C."/>
            <person name="Berks M."/>
            <person name="Bonfield J."/>
            <person name="Burton J."/>
            <person name="Connell M."/>
            <person name="Copsey T."/>
            <person name="Cooper J."/>
            <person name="Coulson A."/>
            <person name="Craxton M."/>
            <person name="Dear S."/>
            <person name="Du Z."/>
            <person name="Durbin R."/>
            <person name="Favello A."/>
            <person name="Fraser A."/>
            <person name="Fulton L."/>
            <person name="Gardner A."/>
            <person name="Green P."/>
            <person name="Hawkins T."/>
            <person name="Hillier L."/>
            <person name="Jier M."/>
            <person name="Johnston L."/>
            <person name="Jones M."/>
            <person name="Kershaw J."/>
            <person name="Kirsten J."/>
            <person name="Laisster N."/>
            <person name="Latreille P."/>
            <person name="Lightning J."/>
            <person name="Lloyd C."/>
            <person name="Mortimore B."/>
            <person name="O'Callaghan M."/>
            <person name="Parsons J."/>
            <person name="Percy C."/>
            <person name="Rifken L."/>
            <person name="Roopra A."/>
            <person name="Saunders D."/>
            <person name="Shownkeen R."/>
            <person name="Sims M."/>
            <person name="Smaldon N."/>
            <person name="Smith A."/>
            <person name="Smith M."/>
            <person name="Sonnhammer E."/>
            <person name="Staden R."/>
            <person name="Sulston J."/>
            <person name="Thierry-Mieg J."/>
            <person name="Thomas K."/>
            <person name="Vaudin M."/>
            <person name="Vaughan K."/>
            <person name="Waterston R."/>
            <person name="Watson A."/>
            <person name="Weinstock L."/>
            <person name="Wilkinson-Sproat J."/>
            <person name="Wohldman P."/>
        </authorList>
    </citation>
    <scope>NUCLEOTIDE SEQUENCE [LARGE SCALE GENOMIC DNA]</scope>
    <source>
        <strain>Bristol N2</strain>
    </source>
</reference>
<reference key="3">
    <citation type="journal article" date="1998" name="Science">
        <title>Genome sequence of the nematode C. elegans: a platform for investigating biology.</title>
        <authorList>
            <consortium name="The C. elegans sequencing consortium"/>
        </authorList>
    </citation>
    <scope>NUCLEOTIDE SEQUENCE [LARGE SCALE GENOMIC DNA]</scope>
    <scope>ALTERNATIVE SPLICING</scope>
    <source>
        <strain>Bristol N2</strain>
    </source>
</reference>
<reference key="4">
    <citation type="journal article" date="2002" name="Biochem. Biophys. Res. Commun.">
        <title>Isolation of the interacting molecules with GEX-3 by a novel functional screening.</title>
        <authorList>
            <person name="Tsuboi D."/>
            <person name="Qadota H."/>
            <person name="Kasuya K."/>
            <person name="Amano M."/>
            <person name="Kaibuchi K."/>
        </authorList>
    </citation>
    <scope>INTERACTION WITH GEX-3</scope>
</reference>
<reference key="5">
    <citation type="journal article" date="2011" name="Cell">
        <title>NCoR1 is a conserved physiological modulator of muscle mass and oxidative function.</title>
        <authorList>
            <person name="Yamamoto H."/>
            <person name="Williams E.G."/>
            <person name="Mouchiroud L."/>
            <person name="Canto C."/>
            <person name="Fan W."/>
            <person name="Downes M."/>
            <person name="Heligon C."/>
            <person name="Barish G.D."/>
            <person name="Desvergne B."/>
            <person name="Evans R.M."/>
            <person name="Schoonjans K."/>
            <person name="Auwerx J."/>
        </authorList>
    </citation>
    <scope>FUNCTION</scope>
    <scope>DISRUPTION PHENOTYPE</scope>
</reference>
<comment type="function">
    <text evidence="5 6">Mediates transcriptional repression by certain nuclear receptors. Plays a role in development and neuronal function. May play a role in muscle-specific oxidative mitochondrial metabolism.</text>
</comment>
<comment type="subunit">
    <text evidence="4 6">Interacts with gex-3. Interacts (via C-terminus) with nhr-60.</text>
</comment>
<comment type="subcellular location">
    <subcellularLocation>
        <location evidence="8">Nucleus</location>
    </subcellularLocation>
</comment>
<comment type="alternative products">
    <event type="alternative splicing"/>
    <isoform>
        <id>P34333-2</id>
        <name>a</name>
        <sequence type="displayed"/>
    </isoform>
    <isoform>
        <id>P34333-3</id>
        <name>c</name>
        <sequence type="described" ref="VSP_043602"/>
    </isoform>
</comment>
<comment type="tissue specificity">
    <text evidence="6">In larvae, expressed in pharyngeal neurons, ventral and dorsal nerve cords, tail neurons, egg-laying neurons and egg-laying muscles. Detected in the neurons of the pharyngeal nerve ring, head neurons, tail neurons and egg-laying muscles in adults. Detected in male-specific tail ganglia and rays in males.</text>
</comment>
<comment type="developmental stage">
    <text evidence="6">Expressed throughout the developmental stages with a 2-fold increase in late larval (L4) stage.</text>
</comment>
<comment type="disruption phenotype">
    <text evidence="5 6">Mutant animals display a progressive defect in locomotion starting at the L2 stage, showing delayed response to prodding, irregular thrashing movements and a low pharyngeal pumping rate. Worms have shorter body length, convoluted intestine and develop gonadogenesis defects including loss of spermathecae, sterility and larval arrest at L4 stage. They also show abnormal cholinergic signaling leading to early onset of paralysis in the presence of aldicarb, an acetylcholinesterase inhibitor. RNAi-mediated knockdown results in enlargement of mitochondria in the body wall muscle. Muscle-specific knockdown shows an increased level of oxygen consumption.</text>
</comment>
<comment type="similarity">
    <text evidence="8">Belongs to the N-CoR nuclear receptor corepressors family.</text>
</comment>
<keyword id="KW-0025">Alternative splicing</keyword>
<keyword id="KW-0238">DNA-binding</keyword>
<keyword id="KW-0539">Nucleus</keyword>
<keyword id="KW-1185">Reference proteome</keyword>
<keyword id="KW-0678">Repressor</keyword>
<keyword id="KW-0804">Transcription</keyword>
<keyword id="KW-0805">Transcription regulation</keyword>
<name>NCOR1_CAEEL</name>
<evidence type="ECO:0000255" key="1">
    <source>
        <dbReference type="PROSITE-ProRule" id="PRU00133"/>
    </source>
</evidence>
<evidence type="ECO:0000255" key="2">
    <source>
        <dbReference type="PROSITE-ProRule" id="PRU00624"/>
    </source>
</evidence>
<evidence type="ECO:0000256" key="3">
    <source>
        <dbReference type="SAM" id="MobiDB-lite"/>
    </source>
</evidence>
<evidence type="ECO:0000269" key="4">
    <source>
    </source>
</evidence>
<evidence type="ECO:0000269" key="5">
    <source>
    </source>
</evidence>
<evidence type="ECO:0000269" key="6">
    <source>
    </source>
</evidence>
<evidence type="ECO:0000303" key="7">
    <source>
    </source>
</evidence>
<evidence type="ECO:0000305" key="8"/>
<evidence type="ECO:0000312" key="9">
    <source>
        <dbReference type="WormBase" id="C14B9.6a"/>
    </source>
</evidence>
<sequence>MESFKELAREYDEKFKAFQDDLQKWEETSERKEYAEFHRVQAESEFPELKREREDRERWARAERIRGEDEKSMLAKEHADKKIRLGVAKIPRLLTESERKMDEFVERPGSILKDMKKEHRQSVLDRLEEWSPEERSLFKSRQADHVKIFHGLTEFFVDKTASDLVLFYYMNKKTEDYKKDFKPKKRVTKYKVGAFPSVEELAYFRMMPPLDFSSFPKNSLMCYFCCRTVNGIDLNGTFMPKEAYEIFAICPDEDRVVCSGCREEAAKLYKDNRCFGNRCSNQKKRANRVNRNIPLDFADFPVRTRAFIMDKLGSTRVAVKFCTPCKNALTRWINDVNNKEETIMAELLNYEGQVGWTDDEKTKLVTLINSSPTLDWVSISEGMNRRPNECKMQYDAMNGVKTQPMIEEVDEEDGNGQEEGGDALVNTPTTSSAAARRSGLARNAKKPVRTPRAPRSAGGRRTGGAVTRAQAVPKPVEDLGEEIDEMEIEDNDEDASRGSRGKDSKAPSDRDGSPADMEGDSPEGQDQDADQDQDQDQDVDEEEEEVIVRDIDSPVKTLLSPKILSGGHKPDFPPVPRIQKPSTSSQPPPPEPMDTKENESDDGEEDNDILEIDVDEPPAKRPTPTSSSSHLIGSSSVGGSERELGGRGLVQQQQQQQPQAQSAAPPVTVSTAAAATAERLVNATSPSPSVASQHLVPTETSTSVPPVTIVPPAIQQPVVVISGAAPQFTQQQTTHSPALIAQPIPQQLIPQRVSTPAQILTPTPVRPTAASTPSMDQFLGLFKQQQQQQQQQPQQSNLMQQLGNINPQFLALLLQQQQQQQQVQQAQVQAAQTQGSLTSGTPFQAQQRPDEALQKLFSSPEMLGTLLNAKYQFPQFPQAIQQNPLLMNAQHQLILQQQQLAMQHAQAQAAQAAQAQAAQAAQAQAQAQAEAKLKTQAAQAKAQADAQARVQTQQQAHLKAQAQAQYQMNRPQLIPASVQMPIGINTAYHQKSLTPSETSASATPPAHRPRAATTVGSKMPAGRSNVQEAELRTLKEELIKRIRLFRDRIAEDAHLKREEENIVTYTAQIQASRVQYNTEILGQMKQRYEQAAARRIEIVKELDEPAKFINGVQNKFNDFSVFKLDEIDRQTLHEILQRYAAEQKPDQLQQQQNDFHNLLRQNNIGIRQAQYPALQASPHQAAIIQHQQQQEAFKKLQQQHQDAQKRKLEAPVSSATPQVKRIALSQSSPVQRFSQHPNGTLPHNLAVVYQNKMPQDREKLLQEQQLNQYLFAAQQQHLQQQQQHHGTQPEQKSKRKSGIESITSMQGAPHRHIQLAGPSSSRIQSGRGVSPALSASRSVAPTISGAAGRSITAGTSGHSSTSDYNKELAERMNEVFKPTHPQLLQTKASAMNSNAVSPANTNNSDEIECVYQGPPKTPASIKRLQPTEGPRTLSGQRMKSILSVPAHQRRSSIPPVKTEDEAMECLSMMMYEEAKAPPSDRIVTKLISSSEAAAAANPSAKFSYLDIFNDVVKRDEERCQRMLQSTSVLQPSRELDAFLQQLQQNPQQYANLSAAEKLALQQYQIHSAHQKSQQQAQLQAAQQLQQQQQARPDHYEKFHLLRPNAEIVRPIPTTFSHFLNKATTSTVSSSASAPQFLQPPAAASIAAPTPISTPHAMPSPSVGVQTAPPTPQAVHHPVMPIIPGKPSSVNSNVSDVSSDDDDVRNPEKLPANRLPPLPGDKTAFRSVIDLRATGHVAVTKKIPVKYPLVVQAQNGIQPIKDYGPPCKNLVYEDLSDDE</sequence>
<gene>
    <name evidence="9" type="primary">gei-8</name>
    <name evidence="9" type="synonym">pqn-12</name>
    <name evidence="9" type="ORF">C14B9.6</name>
</gene>